<comment type="catalytic activity">
    <reaction evidence="1">
        <text>L-glutamate + acetyl-CoA = N-acetyl-L-glutamate + CoA + H(+)</text>
        <dbReference type="Rhea" id="RHEA:24292"/>
        <dbReference type="ChEBI" id="CHEBI:15378"/>
        <dbReference type="ChEBI" id="CHEBI:29985"/>
        <dbReference type="ChEBI" id="CHEBI:44337"/>
        <dbReference type="ChEBI" id="CHEBI:57287"/>
        <dbReference type="ChEBI" id="CHEBI:57288"/>
        <dbReference type="EC" id="2.3.1.1"/>
    </reaction>
</comment>
<comment type="pathway">
    <text evidence="1">Amino-acid biosynthesis; L-arginine biosynthesis; N(2)-acetyl-L-ornithine from L-glutamate: step 1/4.</text>
</comment>
<comment type="subcellular location">
    <subcellularLocation>
        <location evidence="1">Cytoplasm</location>
    </subcellularLocation>
</comment>
<comment type="similarity">
    <text evidence="1">Belongs to the acetyltransferase family. ArgA subfamily.</text>
</comment>
<proteinExistence type="inferred from homology"/>
<reference key="1">
    <citation type="submission" date="2008-01" db="EMBL/GenBank/DDBJ databases">
        <title>Complete sequence of Pseudomonas putida GB-1.</title>
        <authorList>
            <consortium name="US DOE Joint Genome Institute"/>
            <person name="Copeland A."/>
            <person name="Lucas S."/>
            <person name="Lapidus A."/>
            <person name="Barry K."/>
            <person name="Glavina del Rio T."/>
            <person name="Dalin E."/>
            <person name="Tice H."/>
            <person name="Pitluck S."/>
            <person name="Bruce D."/>
            <person name="Goodwin L."/>
            <person name="Chertkov O."/>
            <person name="Brettin T."/>
            <person name="Detter J.C."/>
            <person name="Han C."/>
            <person name="Kuske C.R."/>
            <person name="Schmutz J."/>
            <person name="Larimer F."/>
            <person name="Land M."/>
            <person name="Hauser L."/>
            <person name="Kyrpides N."/>
            <person name="Kim E."/>
            <person name="McCarthy J.K."/>
            <person name="Richardson P."/>
        </authorList>
    </citation>
    <scope>NUCLEOTIDE SEQUENCE [LARGE SCALE GENOMIC DNA]</scope>
    <source>
        <strain>GB-1</strain>
    </source>
</reference>
<gene>
    <name evidence="1" type="primary">argA</name>
    <name type="ordered locus">PputGB1_5245</name>
</gene>
<sequence length="432" mass="47399">MPDYVNWLRHASPYINAHRDCTFVVMLPGDGVEHPNFGNIVHDLVLLHSLGVRLVLVHGSRPQIESRLADRGLTPHYHRGMRITDAATLDCVIDAVGALRLAIEARLSMDIAASPMQGSRLRVASGNLVTARPIGVLEGVDYHHTGEVRRVDRKGISRLLDERSIVLLSPLGYSPTGEIFNLACEDVATRAAIELGADKLLLFGAEPGLLDADGKLVRELRPQQVAPHLQRLGSDYQGELLDAAAEACKGGVARSHIVSYAEDGALLTELFTRGGGGTLVSQEQFEVVREASIEDVGGLLELISPLEEQGILVRRSREVLEREIEQFSVVEREGMIIACAALYPIADSEAGELACLAVNPEYRHGGRGDELLERIESRARQMGLNTLFVLTTRTAHWFRERGFAPSGVERLPAARASLYNYQRNSKIFEKAL</sequence>
<organism>
    <name type="scientific">Pseudomonas putida (strain GB-1)</name>
    <dbReference type="NCBI Taxonomy" id="76869"/>
    <lineage>
        <taxon>Bacteria</taxon>
        <taxon>Pseudomonadati</taxon>
        <taxon>Pseudomonadota</taxon>
        <taxon>Gammaproteobacteria</taxon>
        <taxon>Pseudomonadales</taxon>
        <taxon>Pseudomonadaceae</taxon>
        <taxon>Pseudomonas</taxon>
    </lineage>
</organism>
<dbReference type="EC" id="2.3.1.1" evidence="1"/>
<dbReference type="EMBL" id="CP000926">
    <property type="protein sequence ID" value="ABZ01128.1"/>
    <property type="molecule type" value="Genomic_DNA"/>
</dbReference>
<dbReference type="RefSeq" id="WP_012274739.1">
    <property type="nucleotide sequence ID" value="NC_010322.1"/>
</dbReference>
<dbReference type="SMR" id="B0KP70"/>
<dbReference type="KEGG" id="ppg:PputGB1_5245"/>
<dbReference type="eggNOG" id="COG0548">
    <property type="taxonomic scope" value="Bacteria"/>
</dbReference>
<dbReference type="eggNOG" id="COG1246">
    <property type="taxonomic scope" value="Bacteria"/>
</dbReference>
<dbReference type="HOGENOM" id="CLU_024773_0_0_6"/>
<dbReference type="UniPathway" id="UPA00068">
    <property type="reaction ID" value="UER00106"/>
</dbReference>
<dbReference type="Proteomes" id="UP000002157">
    <property type="component" value="Chromosome"/>
</dbReference>
<dbReference type="GO" id="GO:0005737">
    <property type="term" value="C:cytoplasm"/>
    <property type="evidence" value="ECO:0007669"/>
    <property type="project" value="UniProtKB-SubCell"/>
</dbReference>
<dbReference type="GO" id="GO:0004042">
    <property type="term" value="F:L-glutamate N-acetyltransferase activity"/>
    <property type="evidence" value="ECO:0007669"/>
    <property type="project" value="UniProtKB-UniRule"/>
</dbReference>
<dbReference type="GO" id="GO:0006526">
    <property type="term" value="P:L-arginine biosynthetic process"/>
    <property type="evidence" value="ECO:0007669"/>
    <property type="project" value="UniProtKB-UniRule"/>
</dbReference>
<dbReference type="CDD" id="cd04237">
    <property type="entry name" value="AAK_NAGS-ABP"/>
    <property type="match status" value="1"/>
</dbReference>
<dbReference type="CDD" id="cd04301">
    <property type="entry name" value="NAT_SF"/>
    <property type="match status" value="1"/>
</dbReference>
<dbReference type="Gene3D" id="3.40.630.30">
    <property type="match status" value="1"/>
</dbReference>
<dbReference type="Gene3D" id="3.40.1160.10">
    <property type="entry name" value="Acetylglutamate kinase-like"/>
    <property type="match status" value="1"/>
</dbReference>
<dbReference type="HAMAP" id="MF_01105">
    <property type="entry name" value="N_acetyl_glu_synth"/>
    <property type="match status" value="1"/>
</dbReference>
<dbReference type="InterPro" id="IPR036393">
    <property type="entry name" value="AceGlu_kinase-like_sf"/>
</dbReference>
<dbReference type="InterPro" id="IPR016181">
    <property type="entry name" value="Acyl_CoA_acyltransferase"/>
</dbReference>
<dbReference type="InterPro" id="IPR001048">
    <property type="entry name" value="Asp/Glu/Uridylate_kinase"/>
</dbReference>
<dbReference type="InterPro" id="IPR000182">
    <property type="entry name" value="GNAT_dom"/>
</dbReference>
<dbReference type="InterPro" id="IPR033719">
    <property type="entry name" value="NAGS_kin"/>
</dbReference>
<dbReference type="InterPro" id="IPR010167">
    <property type="entry name" value="NH2A_AcTrfase"/>
</dbReference>
<dbReference type="NCBIfam" id="TIGR01890">
    <property type="entry name" value="N-Ac-Glu-synth"/>
    <property type="match status" value="1"/>
</dbReference>
<dbReference type="NCBIfam" id="NF003641">
    <property type="entry name" value="PRK05279.1"/>
    <property type="match status" value="1"/>
</dbReference>
<dbReference type="PANTHER" id="PTHR30602">
    <property type="entry name" value="AMINO-ACID ACETYLTRANSFERASE"/>
    <property type="match status" value="1"/>
</dbReference>
<dbReference type="PANTHER" id="PTHR30602:SF12">
    <property type="entry name" value="AMINO-ACID ACETYLTRANSFERASE NAGS1, CHLOROPLASTIC-RELATED"/>
    <property type="match status" value="1"/>
</dbReference>
<dbReference type="Pfam" id="PF00696">
    <property type="entry name" value="AA_kinase"/>
    <property type="match status" value="1"/>
</dbReference>
<dbReference type="Pfam" id="PF00583">
    <property type="entry name" value="Acetyltransf_1"/>
    <property type="match status" value="1"/>
</dbReference>
<dbReference type="PIRSF" id="PIRSF000423">
    <property type="entry name" value="ArgA"/>
    <property type="match status" value="1"/>
</dbReference>
<dbReference type="SUPFAM" id="SSF55729">
    <property type="entry name" value="Acyl-CoA N-acyltransferases (Nat)"/>
    <property type="match status" value="1"/>
</dbReference>
<dbReference type="SUPFAM" id="SSF53633">
    <property type="entry name" value="Carbamate kinase-like"/>
    <property type="match status" value="1"/>
</dbReference>
<dbReference type="PROSITE" id="PS51186">
    <property type="entry name" value="GNAT"/>
    <property type="match status" value="1"/>
</dbReference>
<protein>
    <recommendedName>
        <fullName evidence="1">Amino-acid acetyltransferase</fullName>
        <ecNumber evidence="1">2.3.1.1</ecNumber>
    </recommendedName>
    <alternativeName>
        <fullName evidence="1">N-acetylglutamate synthase</fullName>
        <shortName evidence="1">AGS</shortName>
        <shortName evidence="1">NAGS</shortName>
    </alternativeName>
</protein>
<accession>B0KP70</accession>
<feature type="chain" id="PRO_1000084820" description="Amino-acid acetyltransferase">
    <location>
        <begin position="1"/>
        <end position="432"/>
    </location>
</feature>
<feature type="domain" description="N-acetyltransferase" evidence="1">
    <location>
        <begin position="286"/>
        <end position="425"/>
    </location>
</feature>
<name>ARGA_PSEPG</name>
<keyword id="KW-0012">Acyltransferase</keyword>
<keyword id="KW-0028">Amino-acid biosynthesis</keyword>
<keyword id="KW-0055">Arginine biosynthesis</keyword>
<keyword id="KW-0963">Cytoplasm</keyword>
<keyword id="KW-0808">Transferase</keyword>
<evidence type="ECO:0000255" key="1">
    <source>
        <dbReference type="HAMAP-Rule" id="MF_01105"/>
    </source>
</evidence>